<dbReference type="EMBL" id="AL513382">
    <property type="protein sequence ID" value="CAD05297.1"/>
    <property type="molecule type" value="Genomic_DNA"/>
</dbReference>
<dbReference type="EMBL" id="AE014613">
    <property type="protein sequence ID" value="AAO69650.1"/>
    <property type="molecule type" value="Genomic_DNA"/>
</dbReference>
<dbReference type="RefSeq" id="NP_455385.1">
    <property type="nucleotide sequence ID" value="NC_003198.1"/>
</dbReference>
<dbReference type="RefSeq" id="WP_001236024.1">
    <property type="nucleotide sequence ID" value="NZ_WSUR01000019.1"/>
</dbReference>
<dbReference type="SMR" id="Q8XF88"/>
<dbReference type="STRING" id="220341.gene:17584887"/>
<dbReference type="KEGG" id="stt:t2038"/>
<dbReference type="KEGG" id="sty:STY0890"/>
<dbReference type="PATRIC" id="fig|220341.7.peg.899"/>
<dbReference type="eggNOG" id="COG1173">
    <property type="taxonomic scope" value="Bacteria"/>
</dbReference>
<dbReference type="HOGENOM" id="CLU_028518_5_3_6"/>
<dbReference type="OMA" id="IAWTRFK"/>
<dbReference type="OrthoDB" id="9805884at2"/>
<dbReference type="Proteomes" id="UP000000541">
    <property type="component" value="Chromosome"/>
</dbReference>
<dbReference type="Proteomes" id="UP000002670">
    <property type="component" value="Chromosome"/>
</dbReference>
<dbReference type="GO" id="GO:0005886">
    <property type="term" value="C:plasma membrane"/>
    <property type="evidence" value="ECO:0007669"/>
    <property type="project" value="UniProtKB-SubCell"/>
</dbReference>
<dbReference type="GO" id="GO:0071916">
    <property type="term" value="F:dipeptide transmembrane transporter activity"/>
    <property type="evidence" value="ECO:0007669"/>
    <property type="project" value="TreeGrafter"/>
</dbReference>
<dbReference type="CDD" id="cd06261">
    <property type="entry name" value="TM_PBP2"/>
    <property type="match status" value="1"/>
</dbReference>
<dbReference type="FunFam" id="1.10.3720.10:FF:000022">
    <property type="entry name" value="Glutathione ABC transporter permease GsiD"/>
    <property type="match status" value="1"/>
</dbReference>
<dbReference type="Gene3D" id="1.10.3720.10">
    <property type="entry name" value="MetI-like"/>
    <property type="match status" value="1"/>
</dbReference>
<dbReference type="InterPro" id="IPR050366">
    <property type="entry name" value="BP-dependent_transpt_permease"/>
</dbReference>
<dbReference type="InterPro" id="IPR000515">
    <property type="entry name" value="MetI-like"/>
</dbReference>
<dbReference type="InterPro" id="IPR035906">
    <property type="entry name" value="MetI-like_sf"/>
</dbReference>
<dbReference type="InterPro" id="IPR025966">
    <property type="entry name" value="OppC_N"/>
</dbReference>
<dbReference type="NCBIfam" id="NF011662">
    <property type="entry name" value="PRK15082.1"/>
    <property type="match status" value="1"/>
</dbReference>
<dbReference type="PANTHER" id="PTHR43386:SF3">
    <property type="entry name" value="GLUTATHIONE TRANSPORT SYSTEM PERMEASE PROTEIN GSID"/>
    <property type="match status" value="1"/>
</dbReference>
<dbReference type="PANTHER" id="PTHR43386">
    <property type="entry name" value="OLIGOPEPTIDE TRANSPORT SYSTEM PERMEASE PROTEIN APPC"/>
    <property type="match status" value="1"/>
</dbReference>
<dbReference type="Pfam" id="PF00528">
    <property type="entry name" value="BPD_transp_1"/>
    <property type="match status" value="1"/>
</dbReference>
<dbReference type="Pfam" id="PF12911">
    <property type="entry name" value="OppC_N"/>
    <property type="match status" value="1"/>
</dbReference>
<dbReference type="SUPFAM" id="SSF161098">
    <property type="entry name" value="MetI-like"/>
    <property type="match status" value="1"/>
</dbReference>
<dbReference type="PROSITE" id="PS50928">
    <property type="entry name" value="ABC_TM1"/>
    <property type="match status" value="1"/>
</dbReference>
<keyword id="KW-0997">Cell inner membrane</keyword>
<keyword id="KW-1003">Cell membrane</keyword>
<keyword id="KW-0472">Membrane</keyword>
<keyword id="KW-0812">Transmembrane</keyword>
<keyword id="KW-1133">Transmembrane helix</keyword>
<keyword id="KW-0813">Transport</keyword>
<name>GSID_SALTI</name>
<evidence type="ECO:0000250" key="1">
    <source>
        <dbReference type="UniProtKB" id="P75799"/>
    </source>
</evidence>
<evidence type="ECO:0000255" key="2"/>
<evidence type="ECO:0000255" key="3">
    <source>
        <dbReference type="PROSITE-ProRule" id="PRU00441"/>
    </source>
</evidence>
<evidence type="ECO:0000305" key="4"/>
<reference key="1">
    <citation type="journal article" date="2001" name="Nature">
        <title>Complete genome sequence of a multiple drug resistant Salmonella enterica serovar Typhi CT18.</title>
        <authorList>
            <person name="Parkhill J."/>
            <person name="Dougan G."/>
            <person name="James K.D."/>
            <person name="Thomson N.R."/>
            <person name="Pickard D."/>
            <person name="Wain J."/>
            <person name="Churcher C.M."/>
            <person name="Mungall K.L."/>
            <person name="Bentley S.D."/>
            <person name="Holden M.T.G."/>
            <person name="Sebaihia M."/>
            <person name="Baker S."/>
            <person name="Basham D."/>
            <person name="Brooks K."/>
            <person name="Chillingworth T."/>
            <person name="Connerton P."/>
            <person name="Cronin A."/>
            <person name="Davis P."/>
            <person name="Davies R.M."/>
            <person name="Dowd L."/>
            <person name="White N."/>
            <person name="Farrar J."/>
            <person name="Feltwell T."/>
            <person name="Hamlin N."/>
            <person name="Haque A."/>
            <person name="Hien T.T."/>
            <person name="Holroyd S."/>
            <person name="Jagels K."/>
            <person name="Krogh A."/>
            <person name="Larsen T.S."/>
            <person name="Leather S."/>
            <person name="Moule S."/>
            <person name="O'Gaora P."/>
            <person name="Parry C."/>
            <person name="Quail M.A."/>
            <person name="Rutherford K.M."/>
            <person name="Simmonds M."/>
            <person name="Skelton J."/>
            <person name="Stevens K."/>
            <person name="Whitehead S."/>
            <person name="Barrell B.G."/>
        </authorList>
    </citation>
    <scope>NUCLEOTIDE SEQUENCE [LARGE SCALE GENOMIC DNA]</scope>
    <source>
        <strain>CT18</strain>
    </source>
</reference>
<reference key="2">
    <citation type="journal article" date="2003" name="J. Bacteriol.">
        <title>Comparative genomics of Salmonella enterica serovar Typhi strains Ty2 and CT18.</title>
        <authorList>
            <person name="Deng W."/>
            <person name="Liou S.-R."/>
            <person name="Plunkett G. III"/>
            <person name="Mayhew G.F."/>
            <person name="Rose D.J."/>
            <person name="Burland V."/>
            <person name="Kodoyianni V."/>
            <person name="Schwartz D.C."/>
            <person name="Blattner F.R."/>
        </authorList>
    </citation>
    <scope>NUCLEOTIDE SEQUENCE [LARGE SCALE GENOMIC DNA]</scope>
    <source>
        <strain>ATCC 700931 / Ty2</strain>
    </source>
</reference>
<proteinExistence type="inferred from homology"/>
<comment type="function">
    <text evidence="1">Part of the ABC transporter complex GsiABCD involved in glutathione import. Probably responsible for the translocation of the substrate across the membrane.</text>
</comment>
<comment type="subunit">
    <text evidence="1">The complex is composed of two ATP-binding proteins (GsiA), two transmembrane proteins (GsiC and GsiD) and a solute-binding protein (GsiB).</text>
</comment>
<comment type="subcellular location">
    <subcellularLocation>
        <location evidence="1">Cell inner membrane</location>
        <topology evidence="2">Multi-pass membrane protein</topology>
    </subcellularLocation>
</comment>
<comment type="similarity">
    <text evidence="4">Belongs to the binding-protein-dependent transport system permease family.</text>
</comment>
<accession>Q8XF88</accession>
<accession>Q7AN90</accession>
<organism>
    <name type="scientific">Salmonella typhi</name>
    <dbReference type="NCBI Taxonomy" id="90370"/>
    <lineage>
        <taxon>Bacteria</taxon>
        <taxon>Pseudomonadati</taxon>
        <taxon>Pseudomonadota</taxon>
        <taxon>Gammaproteobacteria</taxon>
        <taxon>Enterobacterales</taxon>
        <taxon>Enterobacteriaceae</taxon>
        <taxon>Salmonella</taxon>
    </lineage>
</organism>
<gene>
    <name evidence="1" type="primary">gsiD</name>
    <name type="ordered locus">STY0890</name>
    <name type="ordered locus">t2038</name>
</gene>
<sequence>MRLFNWRRQAILHAMPVVKPDQIRTPWREFWRRFRRQHVALVAGGFVLALILVAIFARWLTPYDAENYFDYDSLNNGPSLQHWFGVDSLGRDIFSRVLVGAQISLAAGVFAVFIGAIIGTVLGLLAGYYEGWWDRFIMRICDVLFAFPGILLAIAVVAVLGSGIANVIVAVAIFSIPAFARLVRGNTLVLKQQTFIESARSIGASDTTILFSHILPGTVSSIVVFFTMRIGTSIISAASLSFLGLGAQPPTPEWGAMLNEARADMVIAPHVALFPAVAIFLTVLAFNLLGDGLRDALDPKIKG</sequence>
<protein>
    <recommendedName>
        <fullName evidence="1">Glutathione transport system permease protein GsiD</fullName>
    </recommendedName>
</protein>
<feature type="chain" id="PRO_0000280010" description="Glutathione transport system permease protein GsiD">
    <location>
        <begin position="1"/>
        <end position="303"/>
    </location>
</feature>
<feature type="transmembrane region" description="Helical" evidence="3">
    <location>
        <begin position="37"/>
        <end position="57"/>
    </location>
</feature>
<feature type="transmembrane region" description="Helical" evidence="3">
    <location>
        <begin position="105"/>
        <end position="125"/>
    </location>
</feature>
<feature type="transmembrane region" description="Helical" evidence="3">
    <location>
        <begin position="144"/>
        <end position="164"/>
    </location>
</feature>
<feature type="transmembrane region" description="Helical" evidence="3">
    <location>
        <begin position="165"/>
        <end position="185"/>
    </location>
</feature>
<feature type="transmembrane region" description="Helical" evidence="3">
    <location>
        <begin position="208"/>
        <end position="228"/>
    </location>
</feature>
<feature type="transmembrane region" description="Helical" evidence="3">
    <location>
        <begin position="230"/>
        <end position="250"/>
    </location>
</feature>
<feature type="transmembrane region" description="Helical" evidence="3">
    <location>
        <begin position="266"/>
        <end position="286"/>
    </location>
</feature>
<feature type="domain" description="ABC transmembrane type-1" evidence="3">
    <location>
        <begin position="101"/>
        <end position="290"/>
    </location>
</feature>